<comment type="function">
    <text evidence="1">This regulatory protein, when combined with SAM (S-adenosylmethionine) represses the expression of the methionine regulon and of enzymes involved in SAM synthesis.</text>
</comment>
<comment type="subunit">
    <text evidence="1">Homodimer.</text>
</comment>
<comment type="subcellular location">
    <subcellularLocation>
        <location evidence="1">Cytoplasm</location>
    </subcellularLocation>
</comment>
<comment type="domain">
    <text>Does not bind DNA by a helix-turn-helix motif.</text>
</comment>
<comment type="similarity">
    <text evidence="1">Belongs to the MetJ family.</text>
</comment>
<accession>B2JZD3</accession>
<gene>
    <name evidence="1" type="primary">metJ</name>
    <name type="ordered locus">YPTS_0107</name>
</gene>
<organism>
    <name type="scientific">Yersinia pseudotuberculosis serotype IB (strain PB1/+)</name>
    <dbReference type="NCBI Taxonomy" id="502801"/>
    <lineage>
        <taxon>Bacteria</taxon>
        <taxon>Pseudomonadati</taxon>
        <taxon>Pseudomonadota</taxon>
        <taxon>Gammaproteobacteria</taxon>
        <taxon>Enterobacterales</taxon>
        <taxon>Yersiniaceae</taxon>
        <taxon>Yersinia</taxon>
    </lineage>
</organism>
<proteinExistence type="inferred from homology"/>
<reference key="1">
    <citation type="submission" date="2008-04" db="EMBL/GenBank/DDBJ databases">
        <title>Complete sequence of Yersinia pseudotuberculosis PB1/+.</title>
        <authorList>
            <person name="Copeland A."/>
            <person name="Lucas S."/>
            <person name="Lapidus A."/>
            <person name="Glavina del Rio T."/>
            <person name="Dalin E."/>
            <person name="Tice H."/>
            <person name="Bruce D."/>
            <person name="Goodwin L."/>
            <person name="Pitluck S."/>
            <person name="Munk A.C."/>
            <person name="Brettin T."/>
            <person name="Detter J.C."/>
            <person name="Han C."/>
            <person name="Tapia R."/>
            <person name="Schmutz J."/>
            <person name="Larimer F."/>
            <person name="Land M."/>
            <person name="Hauser L."/>
            <person name="Challacombe J.F."/>
            <person name="Green L."/>
            <person name="Lindler L.E."/>
            <person name="Nikolich M.P."/>
            <person name="Richardson P."/>
        </authorList>
    </citation>
    <scope>NUCLEOTIDE SEQUENCE [LARGE SCALE GENOMIC DNA]</scope>
    <source>
        <strain>PB1/+</strain>
    </source>
</reference>
<sequence length="105" mass="12150">MAEWNGEYVSPYAEHGKKSEQVKKITVSIPLKVLKILTDERTRRQVNNLRHATNSELLCEAFLHAFTGQPLPNDEDLRKERSDEIPEAAKILMRELGVDPDTWEY</sequence>
<dbReference type="EMBL" id="CP001048">
    <property type="protein sequence ID" value="ACC87106.1"/>
    <property type="molecule type" value="Genomic_DNA"/>
</dbReference>
<dbReference type="RefSeq" id="WP_004392248.1">
    <property type="nucleotide sequence ID" value="NZ_CP009780.1"/>
</dbReference>
<dbReference type="SMR" id="B2JZD3"/>
<dbReference type="GeneID" id="97458248"/>
<dbReference type="KEGG" id="ypb:YPTS_0107"/>
<dbReference type="PATRIC" id="fig|502801.10.peg.3786"/>
<dbReference type="GO" id="GO:0005737">
    <property type="term" value="C:cytoplasm"/>
    <property type="evidence" value="ECO:0007669"/>
    <property type="project" value="UniProtKB-SubCell"/>
</dbReference>
<dbReference type="GO" id="GO:0003677">
    <property type="term" value="F:DNA binding"/>
    <property type="evidence" value="ECO:0007669"/>
    <property type="project" value="UniProtKB-KW"/>
</dbReference>
<dbReference type="GO" id="GO:0003700">
    <property type="term" value="F:DNA-binding transcription factor activity"/>
    <property type="evidence" value="ECO:0007669"/>
    <property type="project" value="InterPro"/>
</dbReference>
<dbReference type="GO" id="GO:0009086">
    <property type="term" value="P:methionine biosynthetic process"/>
    <property type="evidence" value="ECO:0007669"/>
    <property type="project" value="UniProtKB-UniRule"/>
</dbReference>
<dbReference type="GO" id="GO:0045892">
    <property type="term" value="P:negative regulation of DNA-templated transcription"/>
    <property type="evidence" value="ECO:0007669"/>
    <property type="project" value="UniProtKB-UniRule"/>
</dbReference>
<dbReference type="CDD" id="cd00490">
    <property type="entry name" value="Met_repressor_MetJ"/>
    <property type="match status" value="1"/>
</dbReference>
<dbReference type="FunFam" id="1.10.140.10:FF:000001">
    <property type="entry name" value="Met repressor"/>
    <property type="match status" value="1"/>
</dbReference>
<dbReference type="Gene3D" id="1.10.140.10">
    <property type="entry name" value="MET Apo-Repressor, subunit A"/>
    <property type="match status" value="1"/>
</dbReference>
<dbReference type="HAMAP" id="MF_00744">
    <property type="entry name" value="MetJ"/>
    <property type="match status" value="1"/>
</dbReference>
<dbReference type="InterPro" id="IPR002084">
    <property type="entry name" value="Met_repressor_MetJ"/>
</dbReference>
<dbReference type="InterPro" id="IPR023453">
    <property type="entry name" value="Met_repressor_MetJ_dom_sf"/>
</dbReference>
<dbReference type="InterPro" id="IPR010985">
    <property type="entry name" value="Ribbon_hlx_hlx"/>
</dbReference>
<dbReference type="NCBIfam" id="NF003622">
    <property type="entry name" value="PRK05264.1"/>
    <property type="match status" value="1"/>
</dbReference>
<dbReference type="Pfam" id="PF01340">
    <property type="entry name" value="MetJ"/>
    <property type="match status" value="1"/>
</dbReference>
<dbReference type="SUPFAM" id="SSF47598">
    <property type="entry name" value="Ribbon-helix-helix"/>
    <property type="match status" value="1"/>
</dbReference>
<evidence type="ECO:0000255" key="1">
    <source>
        <dbReference type="HAMAP-Rule" id="MF_00744"/>
    </source>
</evidence>
<name>METJ_YERPB</name>
<keyword id="KW-0028">Amino-acid biosynthesis</keyword>
<keyword id="KW-0963">Cytoplasm</keyword>
<keyword id="KW-0238">DNA-binding</keyword>
<keyword id="KW-0486">Methionine biosynthesis</keyword>
<keyword id="KW-0678">Repressor</keyword>
<keyword id="KW-0804">Transcription</keyword>
<keyword id="KW-0805">Transcription regulation</keyword>
<feature type="chain" id="PRO_1000133224" description="Met repressor">
    <location>
        <begin position="1"/>
        <end position="105"/>
    </location>
</feature>
<protein>
    <recommendedName>
        <fullName evidence="1">Met repressor</fullName>
    </recommendedName>
    <alternativeName>
        <fullName evidence="1">Met regulon regulatory protein MetJ</fullName>
    </alternativeName>
</protein>